<reference key="1">
    <citation type="journal article" date="2001" name="Proc. Natl. Acad. Sci. U.S.A.">
        <title>Analysis of the chromosome sequence of the legume symbiont Sinorhizobium meliloti strain 1021.</title>
        <authorList>
            <person name="Capela D."/>
            <person name="Barloy-Hubler F."/>
            <person name="Gouzy J."/>
            <person name="Bothe G."/>
            <person name="Ampe F."/>
            <person name="Batut J."/>
            <person name="Boistard P."/>
            <person name="Becker A."/>
            <person name="Boutry M."/>
            <person name="Cadieu E."/>
            <person name="Dreano S."/>
            <person name="Gloux S."/>
            <person name="Godrie T."/>
            <person name="Goffeau A."/>
            <person name="Kahn D."/>
            <person name="Kiss E."/>
            <person name="Lelaure V."/>
            <person name="Masuy D."/>
            <person name="Pohl T."/>
            <person name="Portetelle D."/>
            <person name="Puehler A."/>
            <person name="Purnelle B."/>
            <person name="Ramsperger U."/>
            <person name="Renard C."/>
            <person name="Thebault P."/>
            <person name="Vandenbol M."/>
            <person name="Weidner S."/>
            <person name="Galibert F."/>
        </authorList>
    </citation>
    <scope>NUCLEOTIDE SEQUENCE [LARGE SCALE GENOMIC DNA]</scope>
    <source>
        <strain>1021</strain>
    </source>
</reference>
<reference key="2">
    <citation type="journal article" date="2001" name="Science">
        <title>The composite genome of the legume symbiont Sinorhizobium meliloti.</title>
        <authorList>
            <person name="Galibert F."/>
            <person name="Finan T.M."/>
            <person name="Long S.R."/>
            <person name="Puehler A."/>
            <person name="Abola P."/>
            <person name="Ampe F."/>
            <person name="Barloy-Hubler F."/>
            <person name="Barnett M.J."/>
            <person name="Becker A."/>
            <person name="Boistard P."/>
            <person name="Bothe G."/>
            <person name="Boutry M."/>
            <person name="Bowser L."/>
            <person name="Buhrmester J."/>
            <person name="Cadieu E."/>
            <person name="Capela D."/>
            <person name="Chain P."/>
            <person name="Cowie A."/>
            <person name="Davis R.W."/>
            <person name="Dreano S."/>
            <person name="Federspiel N.A."/>
            <person name="Fisher R.F."/>
            <person name="Gloux S."/>
            <person name="Godrie T."/>
            <person name="Goffeau A."/>
            <person name="Golding B."/>
            <person name="Gouzy J."/>
            <person name="Gurjal M."/>
            <person name="Hernandez-Lucas I."/>
            <person name="Hong A."/>
            <person name="Huizar L."/>
            <person name="Hyman R.W."/>
            <person name="Jones T."/>
            <person name="Kahn D."/>
            <person name="Kahn M.L."/>
            <person name="Kalman S."/>
            <person name="Keating D.H."/>
            <person name="Kiss E."/>
            <person name="Komp C."/>
            <person name="Lelaure V."/>
            <person name="Masuy D."/>
            <person name="Palm C."/>
            <person name="Peck M.C."/>
            <person name="Pohl T.M."/>
            <person name="Portetelle D."/>
            <person name="Purnelle B."/>
            <person name="Ramsperger U."/>
            <person name="Surzycki R."/>
            <person name="Thebault P."/>
            <person name="Vandenbol M."/>
            <person name="Vorhoelter F.J."/>
            <person name="Weidner S."/>
            <person name="Wells D.H."/>
            <person name="Wong K."/>
            <person name="Yeh K.-C."/>
            <person name="Batut J."/>
        </authorList>
    </citation>
    <scope>NUCLEOTIDE SEQUENCE [LARGE SCALE GENOMIC DNA]</scope>
    <source>
        <strain>1021</strain>
    </source>
</reference>
<accession>Q92QJ9</accession>
<comment type="function">
    <text evidence="1">Catalyzes a trans-dehydration via an enolate intermediate.</text>
</comment>
<comment type="catalytic activity">
    <reaction evidence="1">
        <text>3-dehydroquinate = 3-dehydroshikimate + H2O</text>
        <dbReference type="Rhea" id="RHEA:21096"/>
        <dbReference type="ChEBI" id="CHEBI:15377"/>
        <dbReference type="ChEBI" id="CHEBI:16630"/>
        <dbReference type="ChEBI" id="CHEBI:32364"/>
        <dbReference type="EC" id="4.2.1.10"/>
    </reaction>
</comment>
<comment type="pathway">
    <text evidence="1">Metabolic intermediate biosynthesis; chorismate biosynthesis; chorismate from D-erythrose 4-phosphate and phosphoenolpyruvate: step 3/7.</text>
</comment>
<comment type="subunit">
    <text evidence="1">Homododecamer.</text>
</comment>
<comment type="similarity">
    <text evidence="1">Belongs to the type-II 3-dehydroquinase family.</text>
</comment>
<proteinExistence type="inferred from homology"/>
<name>AROQ_RHIME</name>
<keyword id="KW-0028">Amino-acid biosynthesis</keyword>
<keyword id="KW-0057">Aromatic amino acid biosynthesis</keyword>
<keyword id="KW-0456">Lyase</keyword>
<keyword id="KW-1185">Reference proteome</keyword>
<sequence>MPSTIFVLNGPNLNALGKREPGIYGGKTLADIEAMCKEEAKLLGFDVDFRQSNHEGTLVDWLHEAGEKAVGIAINPAAYGHTSIAMHDAIRAITVPVVELHLSNIHAREEFRHKSMIAPAVKGVICGFGAQSYILALHALKNLTEKSK</sequence>
<organism>
    <name type="scientific">Rhizobium meliloti (strain 1021)</name>
    <name type="common">Ensifer meliloti</name>
    <name type="synonym">Sinorhizobium meliloti</name>
    <dbReference type="NCBI Taxonomy" id="266834"/>
    <lineage>
        <taxon>Bacteria</taxon>
        <taxon>Pseudomonadati</taxon>
        <taxon>Pseudomonadota</taxon>
        <taxon>Alphaproteobacteria</taxon>
        <taxon>Hyphomicrobiales</taxon>
        <taxon>Rhizobiaceae</taxon>
        <taxon>Sinorhizobium/Ensifer group</taxon>
        <taxon>Sinorhizobium</taxon>
    </lineage>
</organism>
<gene>
    <name evidence="1" type="primary">aroQ</name>
    <name type="ordered locus">R01321</name>
    <name type="ORF">SMc01343</name>
</gene>
<feature type="chain" id="PRO_0000159926" description="3-dehydroquinate dehydratase">
    <location>
        <begin position="1"/>
        <end position="148"/>
    </location>
</feature>
<feature type="active site" description="Proton acceptor" evidence="1">
    <location>
        <position position="24"/>
    </location>
</feature>
<feature type="active site" description="Proton donor" evidence="1">
    <location>
        <position position="101"/>
    </location>
</feature>
<feature type="binding site" evidence="1">
    <location>
        <position position="75"/>
    </location>
    <ligand>
        <name>substrate</name>
    </ligand>
</feature>
<feature type="binding site" evidence="1">
    <location>
        <position position="81"/>
    </location>
    <ligand>
        <name>substrate</name>
    </ligand>
</feature>
<feature type="binding site" evidence="1">
    <location>
        <position position="88"/>
    </location>
    <ligand>
        <name>substrate</name>
    </ligand>
</feature>
<feature type="binding site" evidence="1">
    <location>
        <begin position="102"/>
        <end position="103"/>
    </location>
    <ligand>
        <name>substrate</name>
    </ligand>
</feature>
<feature type="binding site" evidence="1">
    <location>
        <position position="112"/>
    </location>
    <ligand>
        <name>substrate</name>
    </ligand>
</feature>
<feature type="site" description="Transition state stabilizer" evidence="1">
    <location>
        <position position="19"/>
    </location>
</feature>
<protein>
    <recommendedName>
        <fullName evidence="1">3-dehydroquinate dehydratase</fullName>
        <shortName evidence="1">3-dehydroquinase</shortName>
        <ecNumber evidence="1">4.2.1.10</ecNumber>
    </recommendedName>
    <alternativeName>
        <fullName evidence="1">Type II DHQase</fullName>
    </alternativeName>
</protein>
<evidence type="ECO:0000255" key="1">
    <source>
        <dbReference type="HAMAP-Rule" id="MF_00169"/>
    </source>
</evidence>
<dbReference type="EC" id="4.2.1.10" evidence="1"/>
<dbReference type="EMBL" id="AL591688">
    <property type="protein sequence ID" value="CAC45900.1"/>
    <property type="molecule type" value="Genomic_DNA"/>
</dbReference>
<dbReference type="RefSeq" id="NP_385427.1">
    <property type="nucleotide sequence ID" value="NC_003047.1"/>
</dbReference>
<dbReference type="RefSeq" id="WP_003533076.1">
    <property type="nucleotide sequence ID" value="NC_003047.1"/>
</dbReference>
<dbReference type="SMR" id="Q92QJ9"/>
<dbReference type="EnsemblBacteria" id="CAC45900">
    <property type="protein sequence ID" value="CAC45900"/>
    <property type="gene ID" value="SMc01343"/>
</dbReference>
<dbReference type="GeneID" id="89575644"/>
<dbReference type="KEGG" id="sme:SMc01343"/>
<dbReference type="PATRIC" id="fig|266834.11.peg.2735"/>
<dbReference type="eggNOG" id="COG0757">
    <property type="taxonomic scope" value="Bacteria"/>
</dbReference>
<dbReference type="HOGENOM" id="CLU_090968_2_0_5"/>
<dbReference type="OrthoDB" id="9790793at2"/>
<dbReference type="UniPathway" id="UPA00053">
    <property type="reaction ID" value="UER00086"/>
</dbReference>
<dbReference type="Proteomes" id="UP000001976">
    <property type="component" value="Chromosome"/>
</dbReference>
<dbReference type="GO" id="GO:0003855">
    <property type="term" value="F:3-dehydroquinate dehydratase activity"/>
    <property type="evidence" value="ECO:0007669"/>
    <property type="project" value="UniProtKB-UniRule"/>
</dbReference>
<dbReference type="GO" id="GO:0008652">
    <property type="term" value="P:amino acid biosynthetic process"/>
    <property type="evidence" value="ECO:0007669"/>
    <property type="project" value="UniProtKB-KW"/>
</dbReference>
<dbReference type="GO" id="GO:0009073">
    <property type="term" value="P:aromatic amino acid family biosynthetic process"/>
    <property type="evidence" value="ECO:0007669"/>
    <property type="project" value="UniProtKB-KW"/>
</dbReference>
<dbReference type="GO" id="GO:0009423">
    <property type="term" value="P:chorismate biosynthetic process"/>
    <property type="evidence" value="ECO:0007669"/>
    <property type="project" value="UniProtKB-UniRule"/>
</dbReference>
<dbReference type="GO" id="GO:0019631">
    <property type="term" value="P:quinate catabolic process"/>
    <property type="evidence" value="ECO:0007669"/>
    <property type="project" value="TreeGrafter"/>
</dbReference>
<dbReference type="CDD" id="cd00466">
    <property type="entry name" value="DHQase_II"/>
    <property type="match status" value="1"/>
</dbReference>
<dbReference type="Gene3D" id="3.40.50.9100">
    <property type="entry name" value="Dehydroquinase, class II"/>
    <property type="match status" value="1"/>
</dbReference>
<dbReference type="HAMAP" id="MF_00169">
    <property type="entry name" value="AroQ"/>
    <property type="match status" value="1"/>
</dbReference>
<dbReference type="InterPro" id="IPR001874">
    <property type="entry name" value="DHquinase_II"/>
</dbReference>
<dbReference type="InterPro" id="IPR018509">
    <property type="entry name" value="DHquinase_II_CS"/>
</dbReference>
<dbReference type="InterPro" id="IPR036441">
    <property type="entry name" value="DHquinase_II_sf"/>
</dbReference>
<dbReference type="NCBIfam" id="TIGR01088">
    <property type="entry name" value="aroQ"/>
    <property type="match status" value="1"/>
</dbReference>
<dbReference type="NCBIfam" id="NF003805">
    <property type="entry name" value="PRK05395.1-2"/>
    <property type="match status" value="1"/>
</dbReference>
<dbReference type="NCBIfam" id="NF003806">
    <property type="entry name" value="PRK05395.1-3"/>
    <property type="match status" value="1"/>
</dbReference>
<dbReference type="NCBIfam" id="NF003807">
    <property type="entry name" value="PRK05395.1-4"/>
    <property type="match status" value="1"/>
</dbReference>
<dbReference type="PANTHER" id="PTHR21272">
    <property type="entry name" value="CATABOLIC 3-DEHYDROQUINASE"/>
    <property type="match status" value="1"/>
</dbReference>
<dbReference type="PANTHER" id="PTHR21272:SF3">
    <property type="entry name" value="CATABOLIC 3-DEHYDROQUINASE"/>
    <property type="match status" value="1"/>
</dbReference>
<dbReference type="Pfam" id="PF01220">
    <property type="entry name" value="DHquinase_II"/>
    <property type="match status" value="1"/>
</dbReference>
<dbReference type="PIRSF" id="PIRSF001399">
    <property type="entry name" value="DHquinase_II"/>
    <property type="match status" value="1"/>
</dbReference>
<dbReference type="SUPFAM" id="SSF52304">
    <property type="entry name" value="Type II 3-dehydroquinate dehydratase"/>
    <property type="match status" value="1"/>
</dbReference>
<dbReference type="PROSITE" id="PS01029">
    <property type="entry name" value="DEHYDROQUINASE_II"/>
    <property type="match status" value="1"/>
</dbReference>